<evidence type="ECO:0000255" key="1"/>
<evidence type="ECO:0000255" key="2">
    <source>
        <dbReference type="PROSITE-ProRule" id="PRU00619"/>
    </source>
</evidence>
<evidence type="ECO:0000269" key="3">
    <source>
    </source>
</evidence>
<evidence type="ECO:0000269" key="4">
    <source>
    </source>
</evidence>
<evidence type="ECO:0000269" key="5">
    <source>
    </source>
</evidence>
<evidence type="ECO:0000269" key="6">
    <source>
    </source>
</evidence>
<evidence type="ECO:0000269" key="7">
    <source>
    </source>
</evidence>
<evidence type="ECO:0000303" key="8">
    <source>
    </source>
</evidence>
<evidence type="ECO:0000303" key="9">
    <source>
    </source>
</evidence>
<evidence type="ECO:0000303" key="10">
    <source>
    </source>
</evidence>
<evidence type="ECO:0000303" key="11">
    <source ref="3"/>
</evidence>
<evidence type="ECO:0000305" key="12"/>
<evidence type="ECO:0000312" key="13">
    <source>
        <dbReference type="HGNC" id="HGNC:17443"/>
    </source>
</evidence>
<evidence type="ECO:0007744" key="14">
    <source>
    </source>
</evidence>
<keyword id="KW-0025">Alternative splicing</keyword>
<keyword id="KW-0496">Mitochondrion</keyword>
<keyword id="KW-0597">Phosphoprotein</keyword>
<keyword id="KW-1267">Proteomics identification</keyword>
<keyword id="KW-1185">Reference proteome</keyword>
<keyword id="KW-0809">Transit peptide</keyword>
<gene>
    <name evidence="13" type="primary">TBRG4</name>
    <name evidence="10" type="synonym">CPR2</name>
    <name evidence="9" type="synonym">FASTKD4</name>
    <name type="synonym">KIAA0948</name>
</gene>
<protein>
    <recommendedName>
        <fullName evidence="9">FAST kinase domain-containing protein 4</fullName>
    </recommendedName>
    <alternativeName>
        <fullName>Cell cycle progression restoration protein 2</fullName>
        <shortName>Cell cycle progression protein 2</shortName>
    </alternativeName>
    <alternativeName>
        <fullName>Protein TBRG4</fullName>
    </alternativeName>
    <alternativeName>
        <fullName evidence="13">Transforming growth factor beta regulator 4</fullName>
    </alternativeName>
</protein>
<sequence length="631" mass="70738">MAAHLVKRCTCLLREAARQAPAMAPVGRLRLAWVAHKTLTSSATSPISHLPGSLMEPVEKERASTPYIEKQVDHLIKKATRPEELLELLGGSHDLDSNQAAMVLIRLSHLLSEKPEDKGLLIQDAHFHQLLCLLNSQIASVWHGTLSKLLGSLYALGIPKASKELQSVEQEVRWRMRKLKYKHLAFLAESCATLSQEQHSQELLAELLTHLERRWTEIEDSHTLVTVMMKVGHLSEPLMNRLEDKCLELVEHFGPNELRKVLVMLAAQSRRSVPLLRAISYHLVQKPFSLTKDVLLDVAYAYGKLSFHQTQVSQRLATDLLSLMPSLTSGEVAHCAKSFALLKWLSLPLFEAFAQHVLNRAQDITLPHLCSVLLAFARLNFHPDQEDQFFSLVHEKLGSELPGLEPALQVDLVWALCVLQQAREAELQAVLHPEFHIQFLGGKSQKDQNTFQKLLHINATALLEYPEYSGPLLPASAVAPGPSALDRKVTPLQKELQETLKGLLGSADKGSLEVATQYGWVLDAEVLLDSDGEFLPVRDFVAPHLAQPTGSQSPPPGSKRLAFLRWEFPNFNSRSKDLLGRFVLARRHIVAAGFLIVDVPFYEWLELKSEWQKGAYLKDKMRKAVAEELAK</sequence>
<reference key="1">
    <citation type="journal article" date="1999" name="DNA Res.">
        <title>Prediction of the coding sequences of unidentified human genes. XIII. The complete sequences of 100 new cDNA clones from brain which code for large proteins in vitro.</title>
        <authorList>
            <person name="Nagase T."/>
            <person name="Ishikawa K."/>
            <person name="Suyama M."/>
            <person name="Kikuno R."/>
            <person name="Hirosawa M."/>
            <person name="Miyajima N."/>
            <person name="Tanaka A."/>
            <person name="Kotani H."/>
            <person name="Nomura N."/>
            <person name="Ohara O."/>
        </authorList>
    </citation>
    <scope>NUCLEOTIDE SEQUENCE [LARGE SCALE MRNA] (ISOFORM 2)</scope>
    <source>
        <tissue>Brain</tissue>
    </source>
</reference>
<reference key="2">
    <citation type="submission" date="2004-01" db="EMBL/GenBank/DDBJ databases">
        <authorList>
            <person name="Ohara O."/>
            <person name="Nagase T."/>
            <person name="Kikuno R."/>
        </authorList>
    </citation>
    <scope>SEQUENCE REVISION</scope>
</reference>
<reference key="3">
    <citation type="submission" date="2005-04" db="EMBL/GenBank/DDBJ databases">
        <authorList>
            <person name="Suzuki Y."/>
            <person name="Sugano S."/>
            <person name="Totoki Y."/>
            <person name="Toyoda A."/>
            <person name="Takeda T."/>
            <person name="Sakaki Y."/>
            <person name="Tanaka A."/>
            <person name="Yokoyama S."/>
        </authorList>
    </citation>
    <scope>NUCLEOTIDE SEQUENCE [LARGE SCALE MRNA] (ISOFORM 2)</scope>
    <source>
        <tissue>Kidney</tissue>
    </source>
</reference>
<reference key="4">
    <citation type="journal article" date="2007" name="BMC Genomics">
        <title>The full-ORF clone resource of the German cDNA consortium.</title>
        <authorList>
            <person name="Bechtel S."/>
            <person name="Rosenfelder H."/>
            <person name="Duda A."/>
            <person name="Schmidt C.P."/>
            <person name="Ernst U."/>
            <person name="Wellenreuther R."/>
            <person name="Mehrle A."/>
            <person name="Schuster C."/>
            <person name="Bahr A."/>
            <person name="Bloecker H."/>
            <person name="Heubner D."/>
            <person name="Hoerlein A."/>
            <person name="Michel G."/>
            <person name="Wedler H."/>
            <person name="Koehrer K."/>
            <person name="Ottenwaelder B."/>
            <person name="Poustka A."/>
            <person name="Wiemann S."/>
            <person name="Schupp I."/>
        </authorList>
    </citation>
    <scope>NUCLEOTIDE SEQUENCE [LARGE SCALE MRNA] (ISOFORM 1)</scope>
    <scope>VARIANTS SER-22 AND LEU-57</scope>
    <source>
        <tissue>Mammary cancer</tissue>
    </source>
</reference>
<reference key="5">
    <citation type="journal article" date="2003" name="Science">
        <title>Human chromosome 7: DNA sequence and biology.</title>
        <authorList>
            <person name="Scherer S.W."/>
            <person name="Cheung J."/>
            <person name="MacDonald J.R."/>
            <person name="Osborne L.R."/>
            <person name="Nakabayashi K."/>
            <person name="Herbrick J.-A."/>
            <person name="Carson A.R."/>
            <person name="Parker-Katiraee L."/>
            <person name="Skaug J."/>
            <person name="Khaja R."/>
            <person name="Zhang J."/>
            <person name="Hudek A.K."/>
            <person name="Li M."/>
            <person name="Haddad M."/>
            <person name="Duggan G.E."/>
            <person name="Fernandez B.A."/>
            <person name="Kanematsu E."/>
            <person name="Gentles S."/>
            <person name="Christopoulos C.C."/>
            <person name="Choufani S."/>
            <person name="Kwasnicka D."/>
            <person name="Zheng X.H."/>
            <person name="Lai Z."/>
            <person name="Nusskern D.R."/>
            <person name="Zhang Q."/>
            <person name="Gu Z."/>
            <person name="Lu F."/>
            <person name="Zeesman S."/>
            <person name="Nowaczyk M.J."/>
            <person name="Teshima I."/>
            <person name="Chitayat D."/>
            <person name="Shuman C."/>
            <person name="Weksberg R."/>
            <person name="Zackai E.H."/>
            <person name="Grebe T.A."/>
            <person name="Cox S.R."/>
            <person name="Kirkpatrick S.J."/>
            <person name="Rahman N."/>
            <person name="Friedman J.M."/>
            <person name="Heng H.H.Q."/>
            <person name="Pelicci P.G."/>
            <person name="Lo-Coco F."/>
            <person name="Belloni E."/>
            <person name="Shaffer L.G."/>
            <person name="Pober B."/>
            <person name="Morton C.C."/>
            <person name="Gusella J.F."/>
            <person name="Bruns G.A.P."/>
            <person name="Korf B.R."/>
            <person name="Quade B.J."/>
            <person name="Ligon A.H."/>
            <person name="Ferguson H."/>
            <person name="Higgins A.W."/>
            <person name="Leach N.T."/>
            <person name="Herrick S.R."/>
            <person name="Lemyre E."/>
            <person name="Farra C.G."/>
            <person name="Kim H.-G."/>
            <person name="Summers A.M."/>
            <person name="Gripp K.W."/>
            <person name="Roberts W."/>
            <person name="Szatmari P."/>
            <person name="Winsor E.J.T."/>
            <person name="Grzeschik K.-H."/>
            <person name="Teebi A."/>
            <person name="Minassian B.A."/>
            <person name="Kere J."/>
            <person name="Armengol L."/>
            <person name="Pujana M.A."/>
            <person name="Estivill X."/>
            <person name="Wilson M.D."/>
            <person name="Koop B.F."/>
            <person name="Tosi S."/>
            <person name="Moore G.E."/>
            <person name="Boright A.P."/>
            <person name="Zlotorynski E."/>
            <person name="Kerem B."/>
            <person name="Kroisel P.M."/>
            <person name="Petek E."/>
            <person name="Oscier D.G."/>
            <person name="Mould S.J."/>
            <person name="Doehner H."/>
            <person name="Doehner K."/>
            <person name="Rommens J.M."/>
            <person name="Vincent J.B."/>
            <person name="Venter J.C."/>
            <person name="Li P.W."/>
            <person name="Mural R.J."/>
            <person name="Adams M.D."/>
            <person name="Tsui L.-C."/>
        </authorList>
    </citation>
    <scope>NUCLEOTIDE SEQUENCE [LARGE SCALE GENOMIC DNA]</scope>
</reference>
<reference key="6">
    <citation type="submission" date="2005-09" db="EMBL/GenBank/DDBJ databases">
        <authorList>
            <person name="Mural R.J."/>
            <person name="Istrail S."/>
            <person name="Sutton G.G."/>
            <person name="Florea L."/>
            <person name="Halpern A.L."/>
            <person name="Mobarry C.M."/>
            <person name="Lippert R."/>
            <person name="Walenz B."/>
            <person name="Shatkay H."/>
            <person name="Dew I."/>
            <person name="Miller J.R."/>
            <person name="Flanigan M.J."/>
            <person name="Edwards N.J."/>
            <person name="Bolanos R."/>
            <person name="Fasulo D."/>
            <person name="Halldorsson B.V."/>
            <person name="Hannenhalli S."/>
            <person name="Turner R."/>
            <person name="Yooseph S."/>
            <person name="Lu F."/>
            <person name="Nusskern D.R."/>
            <person name="Shue B.C."/>
            <person name="Zheng X.H."/>
            <person name="Zhong F."/>
            <person name="Delcher A.L."/>
            <person name="Huson D.H."/>
            <person name="Kravitz S.A."/>
            <person name="Mouchard L."/>
            <person name="Reinert K."/>
            <person name="Remington K.A."/>
            <person name="Clark A.G."/>
            <person name="Waterman M.S."/>
            <person name="Eichler E.E."/>
            <person name="Adams M.D."/>
            <person name="Hunkapiller M.W."/>
            <person name="Myers E.W."/>
            <person name="Venter J.C."/>
        </authorList>
    </citation>
    <scope>NUCLEOTIDE SEQUENCE [LARGE SCALE GENOMIC DNA]</scope>
</reference>
<reference key="7">
    <citation type="journal article" date="2004" name="Genome Res.">
        <title>The status, quality, and expansion of the NIH full-length cDNA project: the Mammalian Gene Collection (MGC).</title>
        <authorList>
            <consortium name="The MGC Project Team"/>
        </authorList>
    </citation>
    <scope>NUCLEOTIDE SEQUENCE [LARGE SCALE MRNA] (ISOFORM 1)</scope>
    <source>
        <tissue>Lung</tissue>
        <tissue>Uterus</tissue>
    </source>
</reference>
<reference key="8">
    <citation type="journal article" date="1997" name="Genetics">
        <title>Human CPR (cell cycle progression restoration) genes impart a Far-phenotype on yeast cells.</title>
        <authorList>
            <person name="Edwards M.C."/>
            <person name="Liegeois N."/>
            <person name="Horecka J."/>
            <person name="DePinho R.A."/>
            <person name="Sprague G.F. Jr."/>
            <person name="Tyers M."/>
            <person name="Elledge S.J."/>
        </authorList>
    </citation>
    <scope>NUCLEOTIDE SEQUENCE [MRNA] OF 172-615 (ISOFORM 1)</scope>
    <scope>FUNCTION</scope>
    <source>
        <tissue>Hepatoma</tissue>
    </source>
</reference>
<reference key="9">
    <citation type="journal article" date="2003" name="Biochim. Biophys. Acta">
        <title>Pig whey acidic protein gene is surrounded by two ubiquitously expressed genes.</title>
        <authorList>
            <person name="Rival-Gervier S."/>
            <person name="Thepot D."/>
            <person name="Jolivet G."/>
            <person name="Houdebine L.-M."/>
        </authorList>
    </citation>
    <scope>TISSUE SPECIFICITY</scope>
    <source>
        <tissue>Lung</tissue>
    </source>
</reference>
<reference key="10">
    <citation type="journal article" date="2008" name="Mol. Cell">
        <title>Kinase-selective enrichment enables quantitative phosphoproteomics of the kinome across the cell cycle.</title>
        <authorList>
            <person name="Daub H."/>
            <person name="Olsen J.V."/>
            <person name="Bairlein M."/>
            <person name="Gnad F."/>
            <person name="Oppermann F.S."/>
            <person name="Korner R."/>
            <person name="Greff Z."/>
            <person name="Keri G."/>
            <person name="Stemmann O."/>
            <person name="Mann M."/>
        </authorList>
    </citation>
    <scope>IDENTIFICATION BY MASS SPECTROMETRY [LARGE SCALE ANALYSIS]</scope>
    <source>
        <tissue>Cervix carcinoma</tissue>
    </source>
</reference>
<reference key="11">
    <citation type="journal article" date="2009" name="Science">
        <title>Lysine acetylation targets protein complexes and co-regulates major cellular functions.</title>
        <authorList>
            <person name="Choudhary C."/>
            <person name="Kumar C."/>
            <person name="Gnad F."/>
            <person name="Nielsen M.L."/>
            <person name="Rehman M."/>
            <person name="Walther T.C."/>
            <person name="Olsen J.V."/>
            <person name="Mann M."/>
        </authorList>
    </citation>
    <scope>IDENTIFICATION BY MASS SPECTROMETRY [LARGE SCALE ANALYSIS]</scope>
</reference>
<reference key="12">
    <citation type="journal article" date="2010" name="Biochem. Biophys. Res. Commun.">
        <title>Fast kinase domain-containing protein 3 is a mitochondrial protein essential for cellular respiration.</title>
        <authorList>
            <person name="Simarro M."/>
            <person name="Gimenez-Cassina A."/>
            <person name="Kedersha N."/>
            <person name="Lazaro J.B."/>
            <person name="Adelmant G.O."/>
            <person name="Marto J.A."/>
            <person name="Rhee K."/>
            <person name="Tisdale S."/>
            <person name="Danial N."/>
            <person name="Benarafa C."/>
            <person name="Orduna A."/>
            <person name="Anderson P."/>
        </authorList>
    </citation>
    <scope>SUBCELLULAR LOCATION</scope>
    <scope>TISSUE SPECIFICITY</scope>
</reference>
<reference key="13">
    <citation type="journal article" date="2011" name="BMC Syst. Biol.">
        <title>Initial characterization of the human central proteome.</title>
        <authorList>
            <person name="Burkard T.R."/>
            <person name="Planyavsky M."/>
            <person name="Kaupe I."/>
            <person name="Breitwieser F.P."/>
            <person name="Buerckstuemmer T."/>
            <person name="Bennett K.L."/>
            <person name="Superti-Furga G."/>
            <person name="Colinge J."/>
        </authorList>
    </citation>
    <scope>IDENTIFICATION BY MASS SPECTROMETRY [LARGE SCALE ANALYSIS]</scope>
</reference>
<reference key="14">
    <citation type="journal article" date="2012" name="Proc. Natl. Acad. Sci. U.S.A.">
        <title>N-terminal acetylome analyses and functional insights of the N-terminal acetyltransferase NatB.</title>
        <authorList>
            <person name="Van Damme P."/>
            <person name="Lasa M."/>
            <person name="Polevoda B."/>
            <person name="Gazquez C."/>
            <person name="Elosegui-Artola A."/>
            <person name="Kim D.S."/>
            <person name="De Juan-Pardo E."/>
            <person name="Demeyer K."/>
            <person name="Hole K."/>
            <person name="Larrea E."/>
            <person name="Timmerman E."/>
            <person name="Prieto J."/>
            <person name="Arnesen T."/>
            <person name="Sherman F."/>
            <person name="Gevaert K."/>
            <person name="Aldabe R."/>
        </authorList>
    </citation>
    <scope>IDENTIFICATION BY MASS SPECTROMETRY [LARGE SCALE ANALYSIS]</scope>
</reference>
<reference key="15">
    <citation type="journal article" date="2013" name="J. Proteome Res.">
        <title>Toward a comprehensive characterization of a human cancer cell phosphoproteome.</title>
        <authorList>
            <person name="Zhou H."/>
            <person name="Di Palma S."/>
            <person name="Preisinger C."/>
            <person name="Peng M."/>
            <person name="Polat A.N."/>
            <person name="Heck A.J."/>
            <person name="Mohammed S."/>
        </authorList>
    </citation>
    <scope>PHOSPHORYLATION [LARGE SCALE ANALYSIS] AT SER-553</scope>
    <scope>IDENTIFICATION BY MASS SPECTROMETRY [LARGE SCALE ANALYSIS]</scope>
    <source>
        <tissue>Cervix carcinoma</tissue>
        <tissue>Erythroleukemia</tissue>
    </source>
</reference>
<reference key="16">
    <citation type="journal article" date="2015" name="Proteomics">
        <title>N-terminome analysis of the human mitochondrial proteome.</title>
        <authorList>
            <person name="Vaca Jacome A.S."/>
            <person name="Rabilloud T."/>
            <person name="Schaeffer-Reiss C."/>
            <person name="Rompais M."/>
            <person name="Ayoub D."/>
            <person name="Lane L."/>
            <person name="Bairoch A."/>
            <person name="Van Dorsselaer A."/>
            <person name="Carapito C."/>
        </authorList>
    </citation>
    <scope>IDENTIFICATION BY MASS SPECTROMETRY [LARGE SCALE ANALYSIS]</scope>
</reference>
<reference key="17">
    <citation type="journal article" date="2017" name="Nucleic Acids Res.">
        <title>FASTKD1 and FASTKD4 have opposite effects on expression of specific mitochondrial RNAs, depending upon their endonuclease-like RAP domain.</title>
        <authorList>
            <person name="Boehm E."/>
            <person name="Zaganelli S."/>
            <person name="Maundrell K."/>
            <person name="Jourdain A.A."/>
            <person name="Thore S."/>
            <person name="Martinou J.C."/>
        </authorList>
    </citation>
    <scope>SUBCELLULAR LOCATION</scope>
    <scope>FUNCTION</scope>
    <scope>DOMAIN</scope>
    <scope>MUTAGENESIS OF ASP-531</scope>
</reference>
<organism>
    <name type="scientific">Homo sapiens</name>
    <name type="common">Human</name>
    <dbReference type="NCBI Taxonomy" id="9606"/>
    <lineage>
        <taxon>Eukaryota</taxon>
        <taxon>Metazoa</taxon>
        <taxon>Chordata</taxon>
        <taxon>Craniata</taxon>
        <taxon>Vertebrata</taxon>
        <taxon>Euteleostomi</taxon>
        <taxon>Mammalia</taxon>
        <taxon>Eutheria</taxon>
        <taxon>Euarchontoglires</taxon>
        <taxon>Primates</taxon>
        <taxon>Haplorrhini</taxon>
        <taxon>Catarrhini</taxon>
        <taxon>Hominidae</taxon>
        <taxon>Homo</taxon>
    </lineage>
</organism>
<proteinExistence type="evidence at protein level"/>
<dbReference type="EMBL" id="AB023165">
    <property type="protein sequence ID" value="BAA76792.2"/>
    <property type="status" value="ALT_INIT"/>
    <property type="molecule type" value="mRNA"/>
</dbReference>
<dbReference type="EMBL" id="AK222943">
    <property type="protein sequence ID" value="BAD96663.1"/>
    <property type="molecule type" value="mRNA"/>
</dbReference>
<dbReference type="EMBL" id="AL833840">
    <property type="protein sequence ID" value="CAD38700.1"/>
    <property type="molecule type" value="mRNA"/>
</dbReference>
<dbReference type="EMBL" id="CH236960">
    <property type="protein sequence ID" value="EAL23744.1"/>
    <property type="molecule type" value="Genomic_DNA"/>
</dbReference>
<dbReference type="EMBL" id="CH236960">
    <property type="protein sequence ID" value="EAL23745.1"/>
    <property type="molecule type" value="Genomic_DNA"/>
</dbReference>
<dbReference type="EMBL" id="CH471128">
    <property type="protein sequence ID" value="EAW61051.1"/>
    <property type="molecule type" value="Genomic_DNA"/>
</dbReference>
<dbReference type="EMBL" id="CH471128">
    <property type="protein sequence ID" value="EAW61052.1"/>
    <property type="molecule type" value="Genomic_DNA"/>
</dbReference>
<dbReference type="EMBL" id="CH471128">
    <property type="protein sequence ID" value="EAW61054.1"/>
    <property type="molecule type" value="Genomic_DNA"/>
</dbReference>
<dbReference type="EMBL" id="CH471128">
    <property type="protein sequence ID" value="EAW61055.1"/>
    <property type="molecule type" value="Genomic_DNA"/>
</dbReference>
<dbReference type="EMBL" id="BC002732">
    <property type="protein sequence ID" value="AAH02732.2"/>
    <property type="molecule type" value="mRNA"/>
</dbReference>
<dbReference type="EMBL" id="BC014918">
    <property type="protein sequence ID" value="AAH14918.1"/>
    <property type="molecule type" value="mRNA"/>
</dbReference>
<dbReference type="EMBL" id="BC017235">
    <property type="protein sequence ID" value="AAH17235.1"/>
    <property type="molecule type" value="mRNA"/>
</dbReference>
<dbReference type="EMBL" id="AF011792">
    <property type="protein sequence ID" value="AAB69312.1"/>
    <property type="status" value="ALT_FRAME"/>
    <property type="molecule type" value="mRNA"/>
</dbReference>
<dbReference type="CCDS" id="CCDS5501.1">
    <molecule id="Q969Z0-1"/>
</dbReference>
<dbReference type="CCDS" id="CCDS5502.1">
    <molecule id="Q969Z0-2"/>
</dbReference>
<dbReference type="RefSeq" id="NP_004740.2">
    <molecule id="Q969Z0-1"/>
    <property type="nucleotide sequence ID" value="NM_004749.3"/>
</dbReference>
<dbReference type="RefSeq" id="NP_112162.1">
    <molecule id="Q969Z0-2"/>
    <property type="nucleotide sequence ID" value="NM_030900.4"/>
</dbReference>
<dbReference type="RefSeq" id="NP_954573.1">
    <molecule id="Q969Z0-2"/>
    <property type="nucleotide sequence ID" value="NM_199122.3"/>
</dbReference>
<dbReference type="SMR" id="Q969Z0"/>
<dbReference type="BioGRID" id="114666">
    <property type="interactions" value="427"/>
</dbReference>
<dbReference type="FunCoup" id="Q969Z0">
    <property type="interactions" value="2295"/>
</dbReference>
<dbReference type="IntAct" id="Q969Z0">
    <property type="interactions" value="273"/>
</dbReference>
<dbReference type="MINT" id="Q969Z0"/>
<dbReference type="STRING" id="9606.ENSP00000258770"/>
<dbReference type="GlyGen" id="Q969Z0">
    <property type="glycosylation" value="2 sites, 1 N-linked glycan (1 site), 1 O-linked glycan (1 site)"/>
</dbReference>
<dbReference type="iPTMnet" id="Q969Z0"/>
<dbReference type="MetOSite" id="Q969Z0"/>
<dbReference type="PhosphoSitePlus" id="Q969Z0"/>
<dbReference type="SwissPalm" id="Q969Z0"/>
<dbReference type="BioMuta" id="TBRG4"/>
<dbReference type="DMDM" id="74731072"/>
<dbReference type="jPOST" id="Q969Z0"/>
<dbReference type="MassIVE" id="Q969Z0"/>
<dbReference type="PaxDb" id="9606-ENSP00000258770"/>
<dbReference type="PeptideAtlas" id="Q969Z0"/>
<dbReference type="ProteomicsDB" id="75880">
    <molecule id="Q969Z0-1"/>
</dbReference>
<dbReference type="ProteomicsDB" id="75881">
    <molecule id="Q969Z0-2"/>
</dbReference>
<dbReference type="Pumba" id="Q969Z0"/>
<dbReference type="Antibodypedia" id="13534">
    <property type="antibodies" value="183 antibodies from 28 providers"/>
</dbReference>
<dbReference type="DNASU" id="9238"/>
<dbReference type="Ensembl" id="ENST00000258770.8">
    <molecule id="Q969Z0-1"/>
    <property type="protein sequence ID" value="ENSP00000258770.3"/>
    <property type="gene ID" value="ENSG00000136270.14"/>
</dbReference>
<dbReference type="Ensembl" id="ENST00000361278.7">
    <molecule id="Q969Z0-2"/>
    <property type="protein sequence ID" value="ENSP00000354992.3"/>
    <property type="gene ID" value="ENSG00000136270.14"/>
</dbReference>
<dbReference type="Ensembl" id="ENST00000395655.8">
    <molecule id="Q969Z0-2"/>
    <property type="protein sequence ID" value="ENSP00000379016.4"/>
    <property type="gene ID" value="ENSG00000136270.14"/>
</dbReference>
<dbReference type="Ensembl" id="ENST00000494076.5">
    <molecule id="Q969Z0-1"/>
    <property type="protein sequence ID" value="ENSP00000420597.1"/>
    <property type="gene ID" value="ENSG00000136270.14"/>
</dbReference>
<dbReference type="GeneID" id="9238"/>
<dbReference type="KEGG" id="hsa:9238"/>
<dbReference type="MANE-Select" id="ENST00000258770.8">
    <property type="protein sequence ID" value="ENSP00000258770.3"/>
    <property type="RefSeq nucleotide sequence ID" value="NM_004749.4"/>
    <property type="RefSeq protein sequence ID" value="NP_004740.2"/>
</dbReference>
<dbReference type="UCSC" id="uc003tmv.5">
    <molecule id="Q969Z0-1"/>
    <property type="organism name" value="human"/>
</dbReference>
<dbReference type="AGR" id="HGNC:17443"/>
<dbReference type="CTD" id="9238"/>
<dbReference type="DisGeNET" id="9238"/>
<dbReference type="GeneCards" id="TBRG4"/>
<dbReference type="HGNC" id="HGNC:17443">
    <property type="gene designation" value="TBRG4"/>
</dbReference>
<dbReference type="HPA" id="ENSG00000136270">
    <property type="expression patterns" value="Low tissue specificity"/>
</dbReference>
<dbReference type="MIM" id="611325">
    <property type="type" value="gene"/>
</dbReference>
<dbReference type="neXtProt" id="NX_Q969Z0"/>
<dbReference type="OpenTargets" id="ENSG00000136270"/>
<dbReference type="PharmGKB" id="PA134882196"/>
<dbReference type="VEuPathDB" id="HostDB:ENSG00000136270"/>
<dbReference type="eggNOG" id="ENOG502QTRE">
    <property type="taxonomic scope" value="Eukaryota"/>
</dbReference>
<dbReference type="GeneTree" id="ENSGT01030000234607"/>
<dbReference type="HOGENOM" id="CLU_029448_0_0_1"/>
<dbReference type="InParanoid" id="Q969Z0"/>
<dbReference type="OMA" id="LCILQQA"/>
<dbReference type="OrthoDB" id="6501018at2759"/>
<dbReference type="PAN-GO" id="Q969Z0">
    <property type="GO annotations" value="5 GO annotations based on evolutionary models"/>
</dbReference>
<dbReference type="PhylomeDB" id="Q969Z0"/>
<dbReference type="TreeFam" id="TF324885"/>
<dbReference type="PathwayCommons" id="Q969Z0"/>
<dbReference type="Reactome" id="R-HSA-9837092">
    <property type="pathway name" value="FASTK family proteins regulate processing and stability of mitochondrial RNAs"/>
</dbReference>
<dbReference type="SignaLink" id="Q969Z0"/>
<dbReference type="BioGRID-ORCS" id="9238">
    <property type="hits" value="49 hits in 1161 CRISPR screens"/>
</dbReference>
<dbReference type="ChiTaRS" id="TBRG4">
    <property type="organism name" value="human"/>
</dbReference>
<dbReference type="GeneWiki" id="TBRG4"/>
<dbReference type="GenomeRNAi" id="9238"/>
<dbReference type="Pharos" id="Q969Z0">
    <property type="development level" value="Tbio"/>
</dbReference>
<dbReference type="PRO" id="PR:Q969Z0"/>
<dbReference type="Proteomes" id="UP000005640">
    <property type="component" value="Chromosome 7"/>
</dbReference>
<dbReference type="RNAct" id="Q969Z0">
    <property type="molecule type" value="protein"/>
</dbReference>
<dbReference type="Bgee" id="ENSG00000136270">
    <property type="expression patterns" value="Expressed in mucosa of transverse colon and 131 other cell types or tissues"/>
</dbReference>
<dbReference type="ExpressionAtlas" id="Q969Z0">
    <property type="expression patterns" value="baseline and differential"/>
</dbReference>
<dbReference type="GO" id="GO:0005759">
    <property type="term" value="C:mitochondrial matrix"/>
    <property type="evidence" value="ECO:0000314"/>
    <property type="project" value="UniProtKB"/>
</dbReference>
<dbReference type="GO" id="GO:0005739">
    <property type="term" value="C:mitochondrion"/>
    <property type="evidence" value="ECO:0000314"/>
    <property type="project" value="HPA"/>
</dbReference>
<dbReference type="GO" id="GO:0035770">
    <property type="term" value="C:ribonucleoprotein granule"/>
    <property type="evidence" value="ECO:0000318"/>
    <property type="project" value="GO_Central"/>
</dbReference>
<dbReference type="GO" id="GO:0003723">
    <property type="term" value="F:RNA binding"/>
    <property type="evidence" value="ECO:0007005"/>
    <property type="project" value="UniProtKB"/>
</dbReference>
<dbReference type="GO" id="GO:0090615">
    <property type="term" value="P:mitochondrial mRNA processing"/>
    <property type="evidence" value="ECO:0000315"/>
    <property type="project" value="UniProtKB"/>
</dbReference>
<dbReference type="GO" id="GO:0000963">
    <property type="term" value="P:mitochondrial RNA processing"/>
    <property type="evidence" value="ECO:0000318"/>
    <property type="project" value="GO_Central"/>
</dbReference>
<dbReference type="GO" id="GO:0016071">
    <property type="term" value="P:mRNA metabolic process"/>
    <property type="evidence" value="ECO:0000315"/>
    <property type="project" value="UniProtKB"/>
</dbReference>
<dbReference type="GO" id="GO:0008284">
    <property type="term" value="P:positive regulation of cell population proliferation"/>
    <property type="evidence" value="ECO:0000304"/>
    <property type="project" value="UniProtKB"/>
</dbReference>
<dbReference type="GO" id="GO:0051726">
    <property type="term" value="P:regulation of cell cycle"/>
    <property type="evidence" value="ECO:0000304"/>
    <property type="project" value="UniProtKB"/>
</dbReference>
<dbReference type="GO" id="GO:0044528">
    <property type="term" value="P:regulation of mitochondrial mRNA stability"/>
    <property type="evidence" value="ECO:0000315"/>
    <property type="project" value="UniProtKB"/>
</dbReference>
<dbReference type="CDD" id="cd23739">
    <property type="entry name" value="TBRG4-like_N"/>
    <property type="match status" value="1"/>
</dbReference>
<dbReference type="InterPro" id="IPR013579">
    <property type="entry name" value="FAST_2"/>
</dbReference>
<dbReference type="InterPro" id="IPR050870">
    <property type="entry name" value="FAST_kinase"/>
</dbReference>
<dbReference type="InterPro" id="IPR010622">
    <property type="entry name" value="FAST_Leu-rich"/>
</dbReference>
<dbReference type="InterPro" id="IPR013584">
    <property type="entry name" value="RAP"/>
</dbReference>
<dbReference type="PANTHER" id="PTHR21228:SF59">
    <property type="entry name" value="FAST KINASE DOMAIN-CONTAINING PROTEIN 4"/>
    <property type="match status" value="1"/>
</dbReference>
<dbReference type="PANTHER" id="PTHR21228">
    <property type="entry name" value="FAST LEU-RICH DOMAIN-CONTAINING"/>
    <property type="match status" value="1"/>
</dbReference>
<dbReference type="Pfam" id="PF06743">
    <property type="entry name" value="FAST_1"/>
    <property type="match status" value="1"/>
</dbReference>
<dbReference type="Pfam" id="PF08368">
    <property type="entry name" value="FAST_2"/>
    <property type="match status" value="1"/>
</dbReference>
<dbReference type="Pfam" id="PF08373">
    <property type="entry name" value="RAP"/>
    <property type="match status" value="1"/>
</dbReference>
<dbReference type="SMART" id="SM00952">
    <property type="entry name" value="RAP"/>
    <property type="match status" value="1"/>
</dbReference>
<dbReference type="PROSITE" id="PS51286">
    <property type="entry name" value="RAP"/>
    <property type="match status" value="1"/>
</dbReference>
<comment type="function">
    <text evidence="6 7">Plays a role in processing of mitochondrial RNA precursors and in stabilization of a subset of mature mitochondrial RNA species, such as MT-CO1, MT-CO2, MT-CYB, MT-CO3, MT-ND3, MT-ND5 and MT-ATP8/6. May play a role in cell cycle progression (PubMed:9383053).</text>
</comment>
<comment type="interaction">
    <interactant intactId="EBI-702328">
        <id>Q969Z0</id>
    </interactant>
    <interactant intactId="EBI-741181">
        <id>Q6RW13</id>
        <label>AGTRAP</label>
    </interactant>
    <organismsDiffer>false</organismsDiffer>
    <experiments>3</experiments>
</comment>
<comment type="interaction">
    <interactant intactId="EBI-702328">
        <id>Q969Z0</id>
    </interactant>
    <interactant intactId="EBI-11522760">
        <id>Q6RW13-2</id>
        <label>AGTRAP</label>
    </interactant>
    <organismsDiffer>false</organismsDiffer>
    <experiments>3</experiments>
</comment>
<comment type="interaction">
    <interactant intactId="EBI-702328">
        <id>Q969Z0</id>
    </interactant>
    <interactant intactId="EBI-11975051">
        <id>Q8TD16-2</id>
        <label>BICD2</label>
    </interactant>
    <organismsDiffer>false</organismsDiffer>
    <experiments>3</experiments>
</comment>
<comment type="interaction">
    <interactant intactId="EBI-702328">
        <id>Q969Z0</id>
    </interactant>
    <interactant intactId="EBI-7996695">
        <id>Q8WZ55</id>
        <label>BSND</label>
    </interactant>
    <organismsDiffer>false</organismsDiffer>
    <experiments>3</experiments>
</comment>
<comment type="interaction">
    <interactant intactId="EBI-702328">
        <id>Q969Z0</id>
    </interactant>
    <interactant intactId="EBI-739580">
        <id>Q13137</id>
        <label>CALCOCO2</label>
    </interactant>
    <organismsDiffer>false</organismsDiffer>
    <experiments>3</experiments>
</comment>
<comment type="interaction">
    <interactant intactId="EBI-702328">
        <id>Q969Z0</id>
    </interactant>
    <interactant intactId="EBI-11063830">
        <id>Q86X02</id>
        <label>CDR2L</label>
    </interactant>
    <organismsDiffer>false</organismsDiffer>
    <experiments>3</experiments>
</comment>
<comment type="interaction">
    <interactant intactId="EBI-702328">
        <id>Q969Z0</id>
    </interactant>
    <interactant intactId="EBI-17278014">
        <id>Q8IZR5-2</id>
        <label>CMTM4</label>
    </interactant>
    <organismsDiffer>false</organismsDiffer>
    <experiments>3</experiments>
</comment>
<comment type="interaction">
    <interactant intactId="EBI-702328">
        <id>Q969Z0</id>
    </interactant>
    <interactant intactId="EBI-11522780">
        <id>Q96DZ9-2</id>
        <label>CMTM5</label>
    </interactant>
    <organismsDiffer>false</organismsDiffer>
    <experiments>3</experiments>
</comment>
<comment type="interaction">
    <interactant intactId="EBI-702328">
        <id>Q969Z0</id>
    </interactant>
    <interactant intactId="EBI-10973142">
        <id>Q9NRY5</id>
        <label>FAM114A2</label>
    </interactant>
    <organismsDiffer>false</organismsDiffer>
    <experiments>4</experiments>
</comment>
<comment type="interaction">
    <interactant intactId="EBI-702328">
        <id>Q969Z0</id>
    </interactant>
    <interactant intactId="EBI-10175124">
        <id>Q8IZU0</id>
        <label>FAM9B</label>
    </interactant>
    <organismsDiffer>false</organismsDiffer>
    <experiments>3</experiments>
</comment>
<comment type="interaction">
    <interactant intactId="EBI-702328">
        <id>Q969Z0</id>
    </interactant>
    <interactant intactId="EBI-473189">
        <id>Q96D09</id>
        <label>GPRASP2</label>
    </interactant>
    <organismsDiffer>false</organismsDiffer>
    <experiments>3</experiments>
</comment>
<comment type="interaction">
    <interactant intactId="EBI-702328">
        <id>Q969Z0</id>
    </interactant>
    <interactant intactId="EBI-18053395">
        <id>Q7Z5P4</id>
        <label>HSD17B13</label>
    </interactant>
    <organismsDiffer>false</organismsDiffer>
    <experiments>3</experiments>
</comment>
<comment type="interaction">
    <interactant intactId="EBI-702328">
        <id>Q969Z0</id>
    </interactant>
    <interactant intactId="EBI-3044087">
        <id>Q7Z3Y8</id>
        <label>KRT27</label>
    </interactant>
    <organismsDiffer>false</organismsDiffer>
    <experiments>3</experiments>
</comment>
<comment type="interaction">
    <interactant intactId="EBI-702328">
        <id>Q969Z0</id>
    </interactant>
    <interactant intactId="EBI-2830566">
        <id>Q9H400</id>
        <label>LIME1</label>
    </interactant>
    <organismsDiffer>false</organismsDiffer>
    <experiments>3</experiments>
</comment>
<comment type="interaction">
    <interactant intactId="EBI-702328">
        <id>Q969Z0</id>
    </interactant>
    <interactant intactId="EBI-944295">
        <id>Q969L2</id>
        <label>MAL2</label>
    </interactant>
    <organismsDiffer>false</organismsDiffer>
    <experiments>3</experiments>
</comment>
<comment type="interaction">
    <interactant intactId="EBI-702328">
        <id>Q969Z0</id>
    </interactant>
    <interactant intactId="EBI-16439278">
        <id>Q6FHY5</id>
        <label>MEOX2</label>
    </interactant>
    <organismsDiffer>false</organismsDiffer>
    <experiments>3</experiments>
</comment>
<comment type="interaction">
    <interactant intactId="EBI-702328">
        <id>Q969Z0</id>
    </interactant>
    <interactant intactId="EBI-22113571">
        <id>Q96FM1</id>
        <label>PGAP3</label>
    </interactant>
    <organismsDiffer>false</organismsDiffer>
    <experiments>2</experiments>
</comment>
<comment type="interaction">
    <interactant intactId="EBI-702328">
        <id>Q969Z0</id>
    </interactant>
    <interactant intactId="EBI-13360404">
        <id>Q04118</id>
        <label>PRB3</label>
    </interactant>
    <organismsDiffer>false</organismsDiffer>
    <experiments>3</experiments>
</comment>
<comment type="interaction">
    <interactant intactId="EBI-702328">
        <id>Q969Z0</id>
    </interactant>
    <interactant intactId="EBI-10192441">
        <id>Q86VR2</id>
        <label>RETREG3</label>
    </interactant>
    <organismsDiffer>false</organismsDiffer>
    <experiments>3</experiments>
</comment>
<comment type="interaction">
    <interactant intactId="EBI-702328">
        <id>Q969Z0</id>
    </interactant>
    <interactant intactId="EBI-954338">
        <id>O15126</id>
        <label>SCAMP1</label>
    </interactant>
    <organismsDiffer>false</organismsDiffer>
    <experiments>3</experiments>
</comment>
<comment type="interaction">
    <interactant intactId="EBI-702328">
        <id>Q969Z0</id>
    </interactant>
    <interactant intactId="EBI-2854842">
        <id>Q8WV19</id>
        <label>SFT2D1</label>
    </interactant>
    <organismsDiffer>false</organismsDiffer>
    <experiments>3</experiments>
</comment>
<comment type="interaction">
    <interactant intactId="EBI-702328">
        <id>Q969Z0</id>
    </interactant>
    <interactant intactId="EBI-10176124">
        <id>B7ZLI8</id>
        <label>STK19</label>
    </interactant>
    <organismsDiffer>false</organismsDiffer>
    <experiments>3</experiments>
</comment>
<comment type="interaction">
    <interactant intactId="EBI-702328">
        <id>Q969Z0</id>
    </interactant>
    <interactant intactId="EBI-1105213">
        <id>Q9UBB9</id>
        <label>TFIP11</label>
    </interactant>
    <organismsDiffer>false</organismsDiffer>
    <experiments>3</experiments>
</comment>
<comment type="interaction">
    <interactant intactId="EBI-702328">
        <id>Q969Z0</id>
    </interactant>
    <interactant intactId="EBI-11528917">
        <id>Q8WW34-2</id>
        <label>TMEM239</label>
    </interactant>
    <organismsDiffer>false</organismsDiffer>
    <experiments>3</experiments>
</comment>
<comment type="interaction">
    <interactant intactId="EBI-702328">
        <id>Q969Z0</id>
    </interactant>
    <interactant intactId="EBI-1044859">
        <id>Q9UBN6</id>
        <label>TNFRSF10D</label>
    </interactant>
    <organismsDiffer>false</organismsDiffer>
    <experiments>3</experiments>
</comment>
<comment type="subcellular location">
    <subcellularLocation>
        <location evidence="5 6">Mitochondrion matrix</location>
    </subcellularLocation>
</comment>
<comment type="alternative products">
    <event type="alternative splicing"/>
    <isoform>
        <id>Q969Z0-1</id>
        <name>1</name>
        <sequence type="displayed"/>
    </isoform>
    <isoform>
        <id>Q969Z0-2</id>
        <name>2</name>
        <sequence type="described" ref="VSP_022460"/>
    </isoform>
</comment>
<comment type="tissue specificity">
    <text evidence="3 5">Ubiquitously expressed (PubMed:12759187). Expression detected in spleen, thymus, testis, ovary, colon, heart, smooth muscle, kidney, brain, lung, liver and white adipose tissue with highest expression in smooth muscle (PubMed:20869947).</text>
</comment>
<comment type="domain">
    <text evidence="6">RAP domain is required for TBRG4 function in mRNA stability and translation.</text>
</comment>
<comment type="similarity">
    <text evidence="12">Belongs to the FAST kinase family.</text>
</comment>
<comment type="sequence caution" evidence="12">
    <conflict type="frameshift">
        <sequence resource="EMBL-CDS" id="AAB69312"/>
    </conflict>
</comment>
<comment type="sequence caution" evidence="12">
    <conflict type="erroneous initiation">
        <sequence resource="EMBL-CDS" id="BAA76792"/>
    </conflict>
</comment>
<accession>Q969Z0</accession>
<accession>A4D2L2</accession>
<accession>A4D2L3</accession>
<accession>D3DVL5</accession>
<accession>D3DVL6</accession>
<accession>O14710</accession>
<accession>Q53GI8</accession>
<accession>Q8NDM4</accession>
<accession>Q9BUC6</accession>
<accession>Q9Y2F6</accession>
<name>FAKD4_HUMAN</name>
<feature type="transit peptide" description="Mitochondrion" evidence="1">
    <location>
        <begin position="1"/>
        <end position="107"/>
    </location>
</feature>
<feature type="chain" id="PRO_0000273026" description="FAST kinase domain-containing protein 4">
    <location>
        <begin position="108"/>
        <end position="631"/>
    </location>
</feature>
<feature type="domain" description="RAP" evidence="2">
    <location>
        <begin position="561"/>
        <end position="619"/>
    </location>
</feature>
<feature type="modified residue" description="Phosphoserine" evidence="14">
    <location>
        <position position="553"/>
    </location>
</feature>
<feature type="splice variant" id="VSP_022460" description="In isoform 2." evidence="8 11">
    <location>
        <begin position="246"/>
        <end position="355"/>
    </location>
</feature>
<feature type="sequence variant" id="VAR_030071" description="In dbSNP:rs2304694." evidence="4">
    <original>A</original>
    <variation>S</variation>
    <location>
        <position position="22"/>
    </location>
</feature>
<feature type="sequence variant" id="VAR_030072" description="In dbSNP:rs2304693." evidence="4">
    <original>P</original>
    <variation>L</variation>
    <location>
        <position position="57"/>
    </location>
</feature>
<feature type="mutagenesis site" description="Does not affect location in mitochondria; fails to rescue the increased accumulation of the level of mature MT-ND3, MT-CO3, MT-CYB or MT-ND5 mRNA in TBRG4-deficient cells; does not abolish the accumulation of the MT-ND5-CYB precursor RNA in a TBRG4-deficient cell line." evidence="6">
    <original>D</original>
    <variation>A</variation>
    <location>
        <position position="531"/>
    </location>
</feature>
<feature type="sequence conflict" description="In Ref. 3; BAD96663." evidence="12" ref="3">
    <original>T</original>
    <variation>A</variation>
    <location>
        <position position="365"/>
    </location>
</feature>
<feature type="sequence conflict" description="In Ref. 8; AAB69312." evidence="12" ref="8">
    <original>V</original>
    <variation>E</variation>
    <location>
        <position position="489"/>
    </location>
</feature>
<feature type="sequence conflict" description="In Ref. 8; AAB69312." evidence="12" ref="8">
    <original>A</original>
    <variation>S</variation>
    <location>
        <position position="524"/>
    </location>
</feature>